<feature type="signal peptide" evidence="2">
    <location>
        <begin position="1"/>
        <end position="13"/>
    </location>
</feature>
<feature type="chain" id="PRO_0000372810" description="Purple acid phosphatase 5">
    <location>
        <begin position="14"/>
        <end position="396"/>
    </location>
</feature>
<feature type="active site" description="Proton donor" evidence="1">
    <location>
        <position position="260"/>
    </location>
</feature>
<feature type="binding site" evidence="1">
    <location>
        <position position="125"/>
    </location>
    <ligand>
        <name>Fe cation</name>
        <dbReference type="ChEBI" id="CHEBI:24875"/>
    </ligand>
</feature>
<feature type="binding site" evidence="1">
    <location>
        <position position="153"/>
    </location>
    <ligand>
        <name>Fe cation</name>
        <dbReference type="ChEBI" id="CHEBI:24875"/>
    </ligand>
</feature>
<feature type="binding site" evidence="1">
    <location>
        <position position="153"/>
    </location>
    <ligand>
        <name>Zn(2+)</name>
        <dbReference type="ChEBI" id="CHEBI:29105"/>
    </ligand>
</feature>
<feature type="binding site" evidence="1">
    <location>
        <position position="156"/>
    </location>
    <ligand>
        <name>Fe cation</name>
        <dbReference type="ChEBI" id="CHEBI:24875"/>
    </ligand>
</feature>
<feature type="binding site" evidence="1">
    <location>
        <position position="190"/>
    </location>
    <ligand>
        <name>substrate</name>
    </ligand>
</feature>
<feature type="binding site" evidence="1">
    <location>
        <position position="190"/>
    </location>
    <ligand>
        <name>Zn(2+)</name>
        <dbReference type="ChEBI" id="CHEBI:29105"/>
    </ligand>
</feature>
<feature type="binding site" evidence="1">
    <location>
        <position position="250"/>
    </location>
    <ligand>
        <name>Zn(2+)</name>
        <dbReference type="ChEBI" id="CHEBI:29105"/>
    </ligand>
</feature>
<feature type="binding site" evidence="1">
    <location>
        <begin position="287"/>
        <end position="289"/>
    </location>
    <ligand>
        <name>substrate</name>
    </ligand>
</feature>
<feature type="binding site" evidence="1">
    <location>
        <position position="287"/>
    </location>
    <ligand>
        <name>Zn(2+)</name>
        <dbReference type="ChEBI" id="CHEBI:29105"/>
    </ligand>
</feature>
<feature type="binding site" evidence="1">
    <location>
        <position position="289"/>
    </location>
    <ligand>
        <name>Fe cation</name>
        <dbReference type="ChEBI" id="CHEBI:24875"/>
    </ligand>
</feature>
<feature type="glycosylation site" description="N-linked (GlcNAc...) asparagine" evidence="2">
    <location>
        <position position="58"/>
    </location>
</feature>
<feature type="glycosylation site" description="N-linked (GlcNAc...) asparagine" evidence="2">
    <location>
        <position position="133"/>
    </location>
</feature>
<feature type="glycosylation site" description="N-linked (GlcNAc...) asparagine" evidence="2">
    <location>
        <position position="238"/>
    </location>
</feature>
<feature type="glycosylation site" description="N-linked (GlcNAc...) asparagine" evidence="2">
    <location>
        <position position="303"/>
    </location>
</feature>
<feature type="glycosylation site" description="N-linked (GlcNAc...) asparagine" evidence="2">
    <location>
        <position position="360"/>
    </location>
</feature>
<feature type="splice variant" id="VSP_037189" description="In isoform 2." evidence="3 4">
    <original>NKYTPQNSWLQDEFKKVNRSETPWLIVLVHA</original>
    <variation>STSPLWYSIKRASAYIIILSSL</variation>
    <location>
        <begin position="221"/>
        <end position="251"/>
    </location>
</feature>
<comment type="catalytic activity">
    <reaction>
        <text>a phosphate monoester + H2O = an alcohol + phosphate</text>
        <dbReference type="Rhea" id="RHEA:15017"/>
        <dbReference type="ChEBI" id="CHEBI:15377"/>
        <dbReference type="ChEBI" id="CHEBI:30879"/>
        <dbReference type="ChEBI" id="CHEBI:43474"/>
        <dbReference type="ChEBI" id="CHEBI:67140"/>
        <dbReference type="EC" id="3.1.3.2"/>
    </reaction>
</comment>
<comment type="cofactor">
    <cofactor evidence="1">
        <name>Fe cation</name>
        <dbReference type="ChEBI" id="CHEBI:24875"/>
    </cofactor>
    <text evidence="1">Binds 1 Fe cation per subunit.</text>
</comment>
<comment type="cofactor">
    <cofactor evidence="1">
        <name>Zn(2+)</name>
        <dbReference type="ChEBI" id="CHEBI:29105"/>
    </cofactor>
    <text evidence="1">Binds 1 zinc ion per subunit.</text>
</comment>
<comment type="subunit">
    <text evidence="1">Homodimer.</text>
</comment>
<comment type="subcellular location">
    <subcellularLocation>
        <location evidence="1">Secreted</location>
    </subcellularLocation>
</comment>
<comment type="alternative products">
    <event type="alternative splicing"/>
    <isoform>
        <id>Q9C927-1</id>
        <name>1</name>
        <sequence type="displayed"/>
    </isoform>
    <isoform>
        <id>Q9C927-2</id>
        <name>2</name>
        <sequence type="described" ref="VSP_037189"/>
    </isoform>
</comment>
<comment type="similarity">
    <text evidence="5">Belongs to the metallophosphoesterase superfamily. Purple acid phosphatase family.</text>
</comment>
<accession>Q9C927</accession>
<accession>Q09LH2</accession>
<accession>Q1KS91</accession>
<protein>
    <recommendedName>
        <fullName>Purple acid phosphatase 5</fullName>
        <ecNumber>3.1.3.2</ecNumber>
    </recommendedName>
</protein>
<proteinExistence type="evidence at transcript level"/>
<organism>
    <name type="scientific">Arabidopsis thaliana</name>
    <name type="common">Mouse-ear cress</name>
    <dbReference type="NCBI Taxonomy" id="3702"/>
    <lineage>
        <taxon>Eukaryota</taxon>
        <taxon>Viridiplantae</taxon>
        <taxon>Streptophyta</taxon>
        <taxon>Embryophyta</taxon>
        <taxon>Tracheophyta</taxon>
        <taxon>Spermatophyta</taxon>
        <taxon>Magnoliopsida</taxon>
        <taxon>eudicotyledons</taxon>
        <taxon>Gunneridae</taxon>
        <taxon>Pentapetalae</taxon>
        <taxon>rosids</taxon>
        <taxon>malvids</taxon>
        <taxon>Brassicales</taxon>
        <taxon>Brassicaceae</taxon>
        <taxon>Camelineae</taxon>
        <taxon>Arabidopsis</taxon>
    </lineage>
</organism>
<evidence type="ECO:0000250" key="1"/>
<evidence type="ECO:0000255" key="2"/>
<evidence type="ECO:0000303" key="3">
    <source ref="3"/>
</evidence>
<evidence type="ECO:0000303" key="4">
    <source ref="4"/>
</evidence>
<evidence type="ECO:0000305" key="5"/>
<sequence length="396" mass="45420">MSLETFPPPAGYNAPEQVHITQGDHNGRGMIISWVTSLNEDGSNVVTYWIASSDGSDNKSVIATTSSYRYFDYTSGYLHHAIIKELEYKTKYFYELGTGRSTRQFNLTPPKVGPDVPYTFGVIGDLGQTYASNQTLYNYMSNPKGQAVLFAGDLSYADDHPNHDQSKWDSYGRFVEPSAAYQPWIWAAGNHEIDYAQSIGETQPFKPYKNRYHVPYRASQNKYTPQNSWLQDEFKKVNRSETPWLIVLVHAPWYNSNNYHYMEGESMRVTFEPWFVENKVDIVFAGHVHAYERSERVSNIQYNITDGMSTPVKDQNAPVYITIGDGGNIEGIANIFTDPQPSYSAFREASFGHALLEIKNRTHAHYTWHRNKEDEAVIADSIWLKNRYYLPEEETI</sequence>
<dbReference type="EC" id="3.1.3.2"/>
<dbReference type="EMBL" id="AC019018">
    <property type="protein sequence ID" value="AAG52275.1"/>
    <property type="molecule type" value="Genomic_DNA"/>
</dbReference>
<dbReference type="EMBL" id="CP002684">
    <property type="status" value="NOT_ANNOTATED_CDS"/>
    <property type="molecule type" value="Genomic_DNA"/>
</dbReference>
<dbReference type="EMBL" id="DQ459170">
    <property type="protein sequence ID" value="ABE97169.1"/>
    <property type="molecule type" value="mRNA"/>
</dbReference>
<dbReference type="EMBL" id="DQ874389">
    <property type="protein sequence ID" value="ABI49506.1"/>
    <property type="molecule type" value="mRNA"/>
</dbReference>
<dbReference type="RefSeq" id="NP_001319211.1">
    <property type="nucleotide sequence ID" value="NM_001333566.1"/>
</dbReference>
<dbReference type="SMR" id="Q9C927"/>
<dbReference type="FunCoup" id="Q9C927">
    <property type="interactions" value="30"/>
</dbReference>
<dbReference type="STRING" id="3702.Q9C927"/>
<dbReference type="GlyCosmos" id="Q9C927">
    <property type="glycosylation" value="5 sites, No reported glycans"/>
</dbReference>
<dbReference type="GlyGen" id="Q9C927">
    <property type="glycosylation" value="5 sites"/>
</dbReference>
<dbReference type="PaxDb" id="3702-AT1G52940.1"/>
<dbReference type="GeneID" id="841727"/>
<dbReference type="KEGG" id="ath:AT1G52940"/>
<dbReference type="Araport" id="AT1G52940"/>
<dbReference type="TAIR" id="AT1G52940">
    <property type="gene designation" value="PAP5"/>
</dbReference>
<dbReference type="eggNOG" id="KOG1378">
    <property type="taxonomic scope" value="Eukaryota"/>
</dbReference>
<dbReference type="HOGENOM" id="CLU_013387_0_1_1"/>
<dbReference type="InParanoid" id="Q9C927"/>
<dbReference type="PhylomeDB" id="Q9C927"/>
<dbReference type="BioCyc" id="ARA:AT1G52940-MONOMER"/>
<dbReference type="PRO" id="PR:Q9C927"/>
<dbReference type="Proteomes" id="UP000006548">
    <property type="component" value="Chromosome 1"/>
</dbReference>
<dbReference type="ExpressionAtlas" id="Q9C927">
    <property type="expression patterns" value="baseline and differential"/>
</dbReference>
<dbReference type="GO" id="GO:0005576">
    <property type="term" value="C:extracellular region"/>
    <property type="evidence" value="ECO:0007669"/>
    <property type="project" value="UniProtKB-SubCell"/>
</dbReference>
<dbReference type="GO" id="GO:0003993">
    <property type="term" value="F:acid phosphatase activity"/>
    <property type="evidence" value="ECO:0000250"/>
    <property type="project" value="TAIR"/>
</dbReference>
<dbReference type="GO" id="GO:0046872">
    <property type="term" value="F:metal ion binding"/>
    <property type="evidence" value="ECO:0007669"/>
    <property type="project" value="UniProtKB-KW"/>
</dbReference>
<dbReference type="GO" id="GO:0050832">
    <property type="term" value="P:defense response to fungus"/>
    <property type="evidence" value="ECO:0000315"/>
    <property type="project" value="TAIR"/>
</dbReference>
<dbReference type="GO" id="GO:0050829">
    <property type="term" value="P:defense response to Gram-negative bacterium"/>
    <property type="evidence" value="ECO:0000315"/>
    <property type="project" value="TAIR"/>
</dbReference>
<dbReference type="CDD" id="cd00839">
    <property type="entry name" value="MPP_PAPs"/>
    <property type="match status" value="1"/>
</dbReference>
<dbReference type="FunFam" id="2.60.40.380:FF:000001">
    <property type="entry name" value="Fe(3+)-Zn(2+) purple acid phosphatase"/>
    <property type="match status" value="1"/>
</dbReference>
<dbReference type="Gene3D" id="3.60.21.10">
    <property type="match status" value="2"/>
</dbReference>
<dbReference type="Gene3D" id="2.60.40.380">
    <property type="entry name" value="Purple acid phosphatase-like, N-terminal"/>
    <property type="match status" value="1"/>
</dbReference>
<dbReference type="InterPro" id="IPR004843">
    <property type="entry name" value="Calcineurin-like_PHP_ApaH"/>
</dbReference>
<dbReference type="InterPro" id="IPR029052">
    <property type="entry name" value="Metallo-depent_PP-like"/>
</dbReference>
<dbReference type="InterPro" id="IPR041792">
    <property type="entry name" value="MPP_PAP"/>
</dbReference>
<dbReference type="InterPro" id="IPR039331">
    <property type="entry name" value="PPA-like"/>
</dbReference>
<dbReference type="InterPro" id="IPR008963">
    <property type="entry name" value="Purple_acid_Pase-like_N"/>
</dbReference>
<dbReference type="InterPro" id="IPR015914">
    <property type="entry name" value="Purple_acid_Pase_N"/>
</dbReference>
<dbReference type="InterPro" id="IPR025733">
    <property type="entry name" value="Purple_acid_PPase_C_dom"/>
</dbReference>
<dbReference type="PANTHER" id="PTHR22953">
    <property type="entry name" value="ACID PHOSPHATASE RELATED"/>
    <property type="match status" value="1"/>
</dbReference>
<dbReference type="PANTHER" id="PTHR22953:SF120">
    <property type="entry name" value="PURPLE ACID PHOSPHATASE 11-RELATED"/>
    <property type="match status" value="1"/>
</dbReference>
<dbReference type="Pfam" id="PF00149">
    <property type="entry name" value="Metallophos"/>
    <property type="match status" value="1"/>
</dbReference>
<dbReference type="Pfam" id="PF14008">
    <property type="entry name" value="Metallophos_C"/>
    <property type="match status" value="1"/>
</dbReference>
<dbReference type="Pfam" id="PF16656">
    <property type="entry name" value="Pur_ac_phosph_N"/>
    <property type="match status" value="1"/>
</dbReference>
<dbReference type="SUPFAM" id="SSF56300">
    <property type="entry name" value="Metallo-dependent phosphatases"/>
    <property type="match status" value="1"/>
</dbReference>
<dbReference type="SUPFAM" id="SSF49363">
    <property type="entry name" value="Purple acid phosphatase, N-terminal domain"/>
    <property type="match status" value="1"/>
</dbReference>
<name>PPA5_ARATH</name>
<gene>
    <name type="primary">PAP5</name>
    <name type="synonym">AT9</name>
    <name type="ordered locus">At1g52940</name>
    <name type="ORF">F14G24.21</name>
</gene>
<reference key="1">
    <citation type="journal article" date="2000" name="Nature">
        <title>Sequence and analysis of chromosome 1 of the plant Arabidopsis thaliana.</title>
        <authorList>
            <person name="Theologis A."/>
            <person name="Ecker J.R."/>
            <person name="Palm C.J."/>
            <person name="Federspiel N.A."/>
            <person name="Kaul S."/>
            <person name="White O."/>
            <person name="Alonso J."/>
            <person name="Altafi H."/>
            <person name="Araujo R."/>
            <person name="Bowman C.L."/>
            <person name="Brooks S.Y."/>
            <person name="Buehler E."/>
            <person name="Chan A."/>
            <person name="Chao Q."/>
            <person name="Chen H."/>
            <person name="Cheuk R.F."/>
            <person name="Chin C.W."/>
            <person name="Chung M.K."/>
            <person name="Conn L."/>
            <person name="Conway A.B."/>
            <person name="Conway A.R."/>
            <person name="Creasy T.H."/>
            <person name="Dewar K."/>
            <person name="Dunn P."/>
            <person name="Etgu P."/>
            <person name="Feldblyum T.V."/>
            <person name="Feng J.-D."/>
            <person name="Fong B."/>
            <person name="Fujii C.Y."/>
            <person name="Gill J.E."/>
            <person name="Goldsmith A.D."/>
            <person name="Haas B."/>
            <person name="Hansen N.F."/>
            <person name="Hughes B."/>
            <person name="Huizar L."/>
            <person name="Hunter J.L."/>
            <person name="Jenkins J."/>
            <person name="Johnson-Hopson C."/>
            <person name="Khan S."/>
            <person name="Khaykin E."/>
            <person name="Kim C.J."/>
            <person name="Koo H.L."/>
            <person name="Kremenetskaia I."/>
            <person name="Kurtz D.B."/>
            <person name="Kwan A."/>
            <person name="Lam B."/>
            <person name="Langin-Hooper S."/>
            <person name="Lee A."/>
            <person name="Lee J.M."/>
            <person name="Lenz C.A."/>
            <person name="Li J.H."/>
            <person name="Li Y.-P."/>
            <person name="Lin X."/>
            <person name="Liu S.X."/>
            <person name="Liu Z.A."/>
            <person name="Luros J.S."/>
            <person name="Maiti R."/>
            <person name="Marziali A."/>
            <person name="Militscher J."/>
            <person name="Miranda M."/>
            <person name="Nguyen M."/>
            <person name="Nierman W.C."/>
            <person name="Osborne B.I."/>
            <person name="Pai G."/>
            <person name="Peterson J."/>
            <person name="Pham P.K."/>
            <person name="Rizzo M."/>
            <person name="Rooney T."/>
            <person name="Rowley D."/>
            <person name="Sakano H."/>
            <person name="Salzberg S.L."/>
            <person name="Schwartz J.R."/>
            <person name="Shinn P."/>
            <person name="Southwick A.M."/>
            <person name="Sun H."/>
            <person name="Tallon L.J."/>
            <person name="Tambunga G."/>
            <person name="Toriumi M.J."/>
            <person name="Town C.D."/>
            <person name="Utterback T."/>
            <person name="Van Aken S."/>
            <person name="Vaysberg M."/>
            <person name="Vysotskaia V.S."/>
            <person name="Walker M."/>
            <person name="Wu D."/>
            <person name="Yu G."/>
            <person name="Fraser C.M."/>
            <person name="Venter J.C."/>
            <person name="Davis R.W."/>
        </authorList>
    </citation>
    <scope>NUCLEOTIDE SEQUENCE [LARGE SCALE GENOMIC DNA]</scope>
    <source>
        <strain>cv. Columbia</strain>
    </source>
</reference>
<reference key="2">
    <citation type="journal article" date="2017" name="Plant J.">
        <title>Araport11: a complete reannotation of the Arabidopsis thaliana reference genome.</title>
        <authorList>
            <person name="Cheng C.Y."/>
            <person name="Krishnakumar V."/>
            <person name="Chan A.P."/>
            <person name="Thibaud-Nissen F."/>
            <person name="Schobel S."/>
            <person name="Town C.D."/>
        </authorList>
    </citation>
    <scope>GENOME REANNOTATION</scope>
    <source>
        <strain>cv. Columbia</strain>
    </source>
</reference>
<reference key="3">
    <citation type="submission" date="2006-03" db="EMBL/GenBank/DDBJ databases">
        <authorList>
            <person name="Underwood B.A."/>
            <person name="Xiao Y.-L."/>
            <person name="Moskal W.A. Jr."/>
            <person name="Monaghan E.L."/>
            <person name="Wang W."/>
            <person name="Redman J.C."/>
            <person name="Wu H.C."/>
            <person name="Utterback T."/>
            <person name="Town C.D."/>
        </authorList>
    </citation>
    <scope>NUCLEOTIDE SEQUENCE [LARGE SCALE MRNA] (ISOFORM 2)</scope>
    <source>
        <strain>cv. Columbia</strain>
    </source>
</reference>
<reference key="4">
    <citation type="submission" date="2006-08" db="EMBL/GenBank/DDBJ databases">
        <title>Differential expression of Arabidopsis thaliana acid phosphatases in response to abiotic stresses.</title>
        <authorList>
            <person name="Lohrasebi T."/>
            <person name="Malboobi M.A."/>
            <person name="Samaeian A."/>
        </authorList>
    </citation>
    <scope>NUCLEOTIDE SEQUENCE [MRNA] OF 125-242 (ISOFORM 2)</scope>
    <source>
        <tissue>Root</tissue>
    </source>
</reference>
<reference key="5">
    <citation type="journal article" date="2002" name="J. Biol. Chem.">
        <title>Purple acid phosphatases of Arabidopsis thaliana. Comparative analysis and differential regulation by phosphate deprivation.</title>
        <authorList>
            <person name="Li D."/>
            <person name="Zhu H."/>
            <person name="Liu K."/>
            <person name="Liu X."/>
            <person name="Leggewie G."/>
            <person name="Udvardi M."/>
            <person name="Wang D."/>
        </authorList>
    </citation>
    <scope>GENE FAMILY</scope>
    <scope>NOMENCLATURE</scope>
</reference>
<keyword id="KW-0025">Alternative splicing</keyword>
<keyword id="KW-0325">Glycoprotein</keyword>
<keyword id="KW-0378">Hydrolase</keyword>
<keyword id="KW-0408">Iron</keyword>
<keyword id="KW-0479">Metal-binding</keyword>
<keyword id="KW-1185">Reference proteome</keyword>
<keyword id="KW-0964">Secreted</keyword>
<keyword id="KW-0732">Signal</keyword>
<keyword id="KW-0862">Zinc</keyword>